<dbReference type="EC" id="2.7.7.6" evidence="1"/>
<dbReference type="EMBL" id="CP000887">
    <property type="protein sequence ID" value="ACD72683.1"/>
    <property type="molecule type" value="Genomic_DNA"/>
</dbReference>
<dbReference type="RefSeq" id="WP_002964369.1">
    <property type="nucleotide sequence ID" value="NC_010742.1"/>
</dbReference>
<dbReference type="SMR" id="B2S686"/>
<dbReference type="GeneID" id="93016433"/>
<dbReference type="KEGG" id="bmc:BAbS19_I11780"/>
<dbReference type="HOGENOM" id="CLU_000524_3_1_5"/>
<dbReference type="Proteomes" id="UP000002565">
    <property type="component" value="Chromosome 1"/>
</dbReference>
<dbReference type="GO" id="GO:0000428">
    <property type="term" value="C:DNA-directed RNA polymerase complex"/>
    <property type="evidence" value="ECO:0007669"/>
    <property type="project" value="UniProtKB-KW"/>
</dbReference>
<dbReference type="GO" id="GO:0003677">
    <property type="term" value="F:DNA binding"/>
    <property type="evidence" value="ECO:0007669"/>
    <property type="project" value="UniProtKB-UniRule"/>
</dbReference>
<dbReference type="GO" id="GO:0003899">
    <property type="term" value="F:DNA-directed RNA polymerase activity"/>
    <property type="evidence" value="ECO:0007669"/>
    <property type="project" value="UniProtKB-UniRule"/>
</dbReference>
<dbReference type="GO" id="GO:0000287">
    <property type="term" value="F:magnesium ion binding"/>
    <property type="evidence" value="ECO:0007669"/>
    <property type="project" value="UniProtKB-UniRule"/>
</dbReference>
<dbReference type="GO" id="GO:0008270">
    <property type="term" value="F:zinc ion binding"/>
    <property type="evidence" value="ECO:0007669"/>
    <property type="project" value="UniProtKB-UniRule"/>
</dbReference>
<dbReference type="GO" id="GO:0006351">
    <property type="term" value="P:DNA-templated transcription"/>
    <property type="evidence" value="ECO:0007669"/>
    <property type="project" value="UniProtKB-UniRule"/>
</dbReference>
<dbReference type="CDD" id="cd02655">
    <property type="entry name" value="RNAP_beta'_C"/>
    <property type="match status" value="1"/>
</dbReference>
<dbReference type="CDD" id="cd01609">
    <property type="entry name" value="RNAP_beta'_N"/>
    <property type="match status" value="1"/>
</dbReference>
<dbReference type="FunFam" id="4.10.860.120:FF:000001">
    <property type="entry name" value="DNA-directed RNA polymerase subunit beta"/>
    <property type="match status" value="1"/>
</dbReference>
<dbReference type="Gene3D" id="1.10.132.30">
    <property type="match status" value="1"/>
</dbReference>
<dbReference type="Gene3D" id="1.10.150.390">
    <property type="match status" value="1"/>
</dbReference>
<dbReference type="Gene3D" id="1.10.1790.20">
    <property type="match status" value="1"/>
</dbReference>
<dbReference type="Gene3D" id="1.10.40.90">
    <property type="match status" value="1"/>
</dbReference>
<dbReference type="Gene3D" id="2.40.40.20">
    <property type="match status" value="1"/>
</dbReference>
<dbReference type="Gene3D" id="2.40.50.100">
    <property type="match status" value="3"/>
</dbReference>
<dbReference type="Gene3D" id="4.10.860.120">
    <property type="entry name" value="RNA polymerase II, clamp domain"/>
    <property type="match status" value="1"/>
</dbReference>
<dbReference type="Gene3D" id="1.10.274.100">
    <property type="entry name" value="RNA polymerase Rpb1, domain 3"/>
    <property type="match status" value="2"/>
</dbReference>
<dbReference type="HAMAP" id="MF_01322">
    <property type="entry name" value="RNApol_bact_RpoC"/>
    <property type="match status" value="1"/>
</dbReference>
<dbReference type="InterPro" id="IPR045867">
    <property type="entry name" value="DNA-dir_RpoC_beta_prime"/>
</dbReference>
<dbReference type="InterPro" id="IPR012754">
    <property type="entry name" value="DNA-dir_RpoC_beta_prime_bact"/>
</dbReference>
<dbReference type="InterPro" id="IPR000722">
    <property type="entry name" value="RNA_pol_asu"/>
</dbReference>
<dbReference type="InterPro" id="IPR006592">
    <property type="entry name" value="RNA_pol_N"/>
</dbReference>
<dbReference type="InterPro" id="IPR007080">
    <property type="entry name" value="RNA_pol_Rpb1_1"/>
</dbReference>
<dbReference type="InterPro" id="IPR007066">
    <property type="entry name" value="RNA_pol_Rpb1_3"/>
</dbReference>
<dbReference type="InterPro" id="IPR042102">
    <property type="entry name" value="RNA_pol_Rpb1_3_sf"/>
</dbReference>
<dbReference type="InterPro" id="IPR007083">
    <property type="entry name" value="RNA_pol_Rpb1_4"/>
</dbReference>
<dbReference type="InterPro" id="IPR007081">
    <property type="entry name" value="RNA_pol_Rpb1_5"/>
</dbReference>
<dbReference type="InterPro" id="IPR044893">
    <property type="entry name" value="RNA_pol_Rpb1_clamp_domain"/>
</dbReference>
<dbReference type="InterPro" id="IPR038120">
    <property type="entry name" value="Rpb1_funnel_sf"/>
</dbReference>
<dbReference type="NCBIfam" id="TIGR02386">
    <property type="entry name" value="rpoC_TIGR"/>
    <property type="match status" value="1"/>
</dbReference>
<dbReference type="PANTHER" id="PTHR19376">
    <property type="entry name" value="DNA-DIRECTED RNA POLYMERASE"/>
    <property type="match status" value="1"/>
</dbReference>
<dbReference type="PANTHER" id="PTHR19376:SF54">
    <property type="entry name" value="DNA-DIRECTED RNA POLYMERASE SUBUNIT BETA"/>
    <property type="match status" value="1"/>
</dbReference>
<dbReference type="Pfam" id="PF04997">
    <property type="entry name" value="RNA_pol_Rpb1_1"/>
    <property type="match status" value="1"/>
</dbReference>
<dbReference type="Pfam" id="PF00623">
    <property type="entry name" value="RNA_pol_Rpb1_2"/>
    <property type="match status" value="1"/>
</dbReference>
<dbReference type="Pfam" id="PF04983">
    <property type="entry name" value="RNA_pol_Rpb1_3"/>
    <property type="match status" value="1"/>
</dbReference>
<dbReference type="Pfam" id="PF05000">
    <property type="entry name" value="RNA_pol_Rpb1_4"/>
    <property type="match status" value="1"/>
</dbReference>
<dbReference type="Pfam" id="PF04998">
    <property type="entry name" value="RNA_pol_Rpb1_5"/>
    <property type="match status" value="1"/>
</dbReference>
<dbReference type="SMART" id="SM00663">
    <property type="entry name" value="RPOLA_N"/>
    <property type="match status" value="1"/>
</dbReference>
<dbReference type="SUPFAM" id="SSF64484">
    <property type="entry name" value="beta and beta-prime subunits of DNA dependent RNA-polymerase"/>
    <property type="match status" value="1"/>
</dbReference>
<name>RPOC_BRUA1</name>
<accession>B2S686</accession>
<gene>
    <name evidence="1" type="primary">rpoC</name>
    <name type="ordered locus">BAbS19_I11780</name>
</gene>
<organism>
    <name type="scientific">Brucella abortus (strain S19)</name>
    <dbReference type="NCBI Taxonomy" id="430066"/>
    <lineage>
        <taxon>Bacteria</taxon>
        <taxon>Pseudomonadati</taxon>
        <taxon>Pseudomonadota</taxon>
        <taxon>Alphaproteobacteria</taxon>
        <taxon>Hyphomicrobiales</taxon>
        <taxon>Brucellaceae</taxon>
        <taxon>Brucella/Ochrobactrum group</taxon>
        <taxon>Brucella</taxon>
    </lineage>
</organism>
<reference key="1">
    <citation type="journal article" date="2008" name="PLoS ONE">
        <title>Genome sequence of Brucella abortus vaccine strain S19 compared to virulent strains yields candidate virulence genes.</title>
        <authorList>
            <person name="Crasta O.R."/>
            <person name="Folkerts O."/>
            <person name="Fei Z."/>
            <person name="Mane S.P."/>
            <person name="Evans C."/>
            <person name="Martino-Catt S."/>
            <person name="Bricker B."/>
            <person name="Yu G."/>
            <person name="Du L."/>
            <person name="Sobral B.W."/>
        </authorList>
    </citation>
    <scope>NUCLEOTIDE SEQUENCE [LARGE SCALE GENOMIC DNA]</scope>
    <source>
        <strain>S19</strain>
    </source>
</reference>
<feature type="chain" id="PRO_0000353302" description="DNA-directed RNA polymerase subunit beta'">
    <location>
        <begin position="1"/>
        <end position="1400"/>
    </location>
</feature>
<feature type="binding site" evidence="1">
    <location>
        <position position="71"/>
    </location>
    <ligand>
        <name>Zn(2+)</name>
        <dbReference type="ChEBI" id="CHEBI:29105"/>
        <label>1</label>
    </ligand>
</feature>
<feature type="binding site" evidence="1">
    <location>
        <position position="73"/>
    </location>
    <ligand>
        <name>Zn(2+)</name>
        <dbReference type="ChEBI" id="CHEBI:29105"/>
        <label>1</label>
    </ligand>
</feature>
<feature type="binding site" evidence="1">
    <location>
        <position position="86"/>
    </location>
    <ligand>
        <name>Zn(2+)</name>
        <dbReference type="ChEBI" id="CHEBI:29105"/>
        <label>1</label>
    </ligand>
</feature>
<feature type="binding site" evidence="1">
    <location>
        <position position="89"/>
    </location>
    <ligand>
        <name>Zn(2+)</name>
        <dbReference type="ChEBI" id="CHEBI:29105"/>
        <label>1</label>
    </ligand>
</feature>
<feature type="binding site" evidence="1">
    <location>
        <position position="462"/>
    </location>
    <ligand>
        <name>Mg(2+)</name>
        <dbReference type="ChEBI" id="CHEBI:18420"/>
    </ligand>
</feature>
<feature type="binding site" evidence="1">
    <location>
        <position position="464"/>
    </location>
    <ligand>
        <name>Mg(2+)</name>
        <dbReference type="ChEBI" id="CHEBI:18420"/>
    </ligand>
</feature>
<feature type="binding site" evidence="1">
    <location>
        <position position="466"/>
    </location>
    <ligand>
        <name>Mg(2+)</name>
        <dbReference type="ChEBI" id="CHEBI:18420"/>
    </ligand>
</feature>
<feature type="binding site" evidence="1">
    <location>
        <position position="811"/>
    </location>
    <ligand>
        <name>Zn(2+)</name>
        <dbReference type="ChEBI" id="CHEBI:29105"/>
        <label>2</label>
    </ligand>
</feature>
<feature type="binding site" evidence="1">
    <location>
        <position position="885"/>
    </location>
    <ligand>
        <name>Zn(2+)</name>
        <dbReference type="ChEBI" id="CHEBI:29105"/>
        <label>2</label>
    </ligand>
</feature>
<feature type="binding site" evidence="1">
    <location>
        <position position="892"/>
    </location>
    <ligand>
        <name>Zn(2+)</name>
        <dbReference type="ChEBI" id="CHEBI:29105"/>
        <label>2</label>
    </ligand>
</feature>
<feature type="binding site" evidence="1">
    <location>
        <position position="895"/>
    </location>
    <ligand>
        <name>Zn(2+)</name>
        <dbReference type="ChEBI" id="CHEBI:29105"/>
        <label>2</label>
    </ligand>
</feature>
<protein>
    <recommendedName>
        <fullName evidence="1">DNA-directed RNA polymerase subunit beta'</fullName>
        <shortName evidence="1">RNAP subunit beta'</shortName>
        <ecNumber evidence="1">2.7.7.6</ecNumber>
    </recommendedName>
    <alternativeName>
        <fullName evidence="1">RNA polymerase subunit beta'</fullName>
    </alternativeName>
    <alternativeName>
        <fullName evidence="1">Transcriptase subunit beta'</fullName>
    </alternativeName>
</protein>
<sequence length="1400" mass="155641">MNQEVMNLFNPQAPAQTFDSIRISIASPEKILSWSYGEIKKPETINYRTFKPERDGLFCARIFGPIKDYECLCGKYKRMKYKGIICEKCGVEVTLSRVRRERMGHIELAAPVAHIWFLKSLPSRIGTLLDMTLKDIERILYFENYIVTEPGLTSLKEHQLLSEEEYMIAVDEFGEDQFTALIGAEAIYELLASMELEKIAADLRVDLAETTSDLKQKKLMKRLKIVENFLESGNRPEWMIMKIVPVIPPDLRPLVPLDGGRFATSDLNDLYRRVINRNNRLKRLIELRAPGIIIRNEKRMLQEAVDALFDNGRRGRVITGANKRPLKSLSDMLKGKQGRFRQNLLGKRVDYSGRSVIVTGPELKLHQCGLPKKMALELFKPFIYARLDAKGYSSTVKQAKKLVEKERPEVWDILDEVIREHPVLLNRAPTLHRLGIQAFEPTLIEGKAIQLHPLVCTAFNADFDGDQMAVHVPLSLEAQLEARVLMMSTNNILHPANGAPIIVPSQDMVLGLYYLSIVAEKEPGEGMIFADMGELQHALENKVVTLHTKIKGRFKTVDAEGNPVLKIYDTTPGRMIMGELLPKNVNVPFDICNQEMTKKNISKMIDHVYRHCGQKETVIFCDRIMQLGFAHACRAGISFGKDDMVIPESKAKIVAETEALTTEYEQQYNDGLITQGEKYNKVVDAWGKATDKITEEMMARLKAVEFDPVTGRQKQMNSVYMMSHSGARGSVNQMRQLGGMRGLMAKPSGEIIETPIISNFKEGLTVNEYFNSTHGARKGLADTALKTANSGYLTRRLVDVAQDAIISEVDCGAEIGLTMQPIVDAGQIVASIGQRVLGRTALDPILHPVTGEVIVEAGRMIEEKDVEIIEKAGIQSIRIRSALTCETRNGVCAKCYGRDLARGTPVNQGEAVGVIAAQSIGEPGTQLTMRTFHLGGTAQVVDSSYLEASYEGTVKLRNRNVVRNSDGNLVVMGRNMAVLILDATGKERAVHRVTYGSRLFVDEGDTVKRGQRIAEWDPYTRPIMTEVEGYVEFEDLVDGLSVSETADESTGITKRVVIDWRSTPRGSDLKPAMVIKDKAGKILKLSKGGDARFLLSVESILSVEPGAHVKAGDVIARLPMESAKTKDITGGLPRVAELFEARRPKDHAIIAEIDGTVRFGRDYKNKRRIIIEPNDDTIEPVEYLIPKGKPFHLQDGDVIEKGEYILDGNPAPHDILAIKGVEALASYLVNEIQEVYRLQGVLINDKHIEVIVRQMLQKVEITESGDTGYIPGDHVDRIELEEINERLIEEGKKPGSGNPVLLGITKASLQTPSFISAASFQETTRVLTEAAVAGKMDTLQGLKENVIVGRLIPAGTGGMTNQIRRIATARDELIIDERRKTSGSAEANAMLVDMTNNAAE</sequence>
<keyword id="KW-0240">DNA-directed RNA polymerase</keyword>
<keyword id="KW-0460">Magnesium</keyword>
<keyword id="KW-0479">Metal-binding</keyword>
<keyword id="KW-0548">Nucleotidyltransferase</keyword>
<keyword id="KW-0804">Transcription</keyword>
<keyword id="KW-0808">Transferase</keyword>
<keyword id="KW-0862">Zinc</keyword>
<evidence type="ECO:0000255" key="1">
    <source>
        <dbReference type="HAMAP-Rule" id="MF_01322"/>
    </source>
</evidence>
<proteinExistence type="inferred from homology"/>
<comment type="function">
    <text evidence="1">DNA-dependent RNA polymerase catalyzes the transcription of DNA into RNA using the four ribonucleoside triphosphates as substrates.</text>
</comment>
<comment type="catalytic activity">
    <reaction evidence="1">
        <text>RNA(n) + a ribonucleoside 5'-triphosphate = RNA(n+1) + diphosphate</text>
        <dbReference type="Rhea" id="RHEA:21248"/>
        <dbReference type="Rhea" id="RHEA-COMP:14527"/>
        <dbReference type="Rhea" id="RHEA-COMP:17342"/>
        <dbReference type="ChEBI" id="CHEBI:33019"/>
        <dbReference type="ChEBI" id="CHEBI:61557"/>
        <dbReference type="ChEBI" id="CHEBI:140395"/>
        <dbReference type="EC" id="2.7.7.6"/>
    </reaction>
</comment>
<comment type="cofactor">
    <cofactor evidence="1">
        <name>Mg(2+)</name>
        <dbReference type="ChEBI" id="CHEBI:18420"/>
    </cofactor>
    <text evidence="1">Binds 1 Mg(2+) ion per subunit.</text>
</comment>
<comment type="cofactor">
    <cofactor evidence="1">
        <name>Zn(2+)</name>
        <dbReference type="ChEBI" id="CHEBI:29105"/>
    </cofactor>
    <text evidence="1">Binds 2 Zn(2+) ions per subunit.</text>
</comment>
<comment type="subunit">
    <text evidence="1">The RNAP catalytic core consists of 2 alpha, 1 beta, 1 beta' and 1 omega subunit. When a sigma factor is associated with the core the holoenzyme is formed, which can initiate transcription.</text>
</comment>
<comment type="similarity">
    <text evidence="1">Belongs to the RNA polymerase beta' chain family.</text>
</comment>